<proteinExistence type="inferred from homology"/>
<keyword id="KW-0520">NAD</keyword>
<keyword id="KW-0808">Transferase</keyword>
<name>KPTA_FLAJ1</name>
<feature type="chain" id="PRO_1000078981" description="Probable RNA 2'-phosphotransferase">
    <location>
        <begin position="1"/>
        <end position="182"/>
    </location>
</feature>
<protein>
    <recommendedName>
        <fullName evidence="1">Probable RNA 2'-phosphotransferase</fullName>
        <ecNumber evidence="1">2.7.1.-</ecNumber>
    </recommendedName>
</protein>
<organism>
    <name type="scientific">Flavobacterium johnsoniae (strain ATCC 17061 / DSM 2064 / JCM 8514 / BCRC 14874 / CCUG 350202 / NBRC 14942 / NCIMB 11054 / UW101)</name>
    <name type="common">Cytophaga johnsonae</name>
    <dbReference type="NCBI Taxonomy" id="376686"/>
    <lineage>
        <taxon>Bacteria</taxon>
        <taxon>Pseudomonadati</taxon>
        <taxon>Bacteroidota</taxon>
        <taxon>Flavobacteriia</taxon>
        <taxon>Flavobacteriales</taxon>
        <taxon>Flavobacteriaceae</taxon>
        <taxon>Flavobacterium</taxon>
    </lineage>
</organism>
<sequence>MNENIAKSISKFLSLVLRHSPEKIGLKLDENGWADVNELIEKCTKKGNRLDAELLDYVVENNDKKRFAYNEDKTKIRASQGHSISVELNLAETEPLEYLYHGTVGKFMESIQKEGLKKMSRQHVHLSKDKETAVKVGSRRGVPQILTVRSGAMYRDGFKFYLSENNVWLTDEVPPKYIEFKS</sequence>
<dbReference type="EC" id="2.7.1.-" evidence="1"/>
<dbReference type="EMBL" id="CP000685">
    <property type="protein sequence ID" value="ABQ03783.1"/>
    <property type="molecule type" value="Genomic_DNA"/>
</dbReference>
<dbReference type="RefSeq" id="WP_012022837.1">
    <property type="nucleotide sequence ID" value="NC_009441.1"/>
</dbReference>
<dbReference type="SMR" id="A5FLZ4"/>
<dbReference type="STRING" id="376686.Fjoh_0748"/>
<dbReference type="KEGG" id="fjo:Fjoh_0748"/>
<dbReference type="eggNOG" id="COG1859">
    <property type="taxonomic scope" value="Bacteria"/>
</dbReference>
<dbReference type="HOGENOM" id="CLU_052998_4_0_10"/>
<dbReference type="OrthoDB" id="4537997at2"/>
<dbReference type="BRENDA" id="2.7.1.160">
    <property type="organism ID" value="14742"/>
</dbReference>
<dbReference type="Proteomes" id="UP000006694">
    <property type="component" value="Chromosome"/>
</dbReference>
<dbReference type="GO" id="GO:0003950">
    <property type="term" value="F:NAD+ poly-ADP-ribosyltransferase activity"/>
    <property type="evidence" value="ECO:0007669"/>
    <property type="project" value="InterPro"/>
</dbReference>
<dbReference type="GO" id="GO:0000215">
    <property type="term" value="F:tRNA 2'-phosphotransferase activity"/>
    <property type="evidence" value="ECO:0007669"/>
    <property type="project" value="TreeGrafter"/>
</dbReference>
<dbReference type="GO" id="GO:0006388">
    <property type="term" value="P:tRNA splicing, via endonucleolytic cleavage and ligation"/>
    <property type="evidence" value="ECO:0007669"/>
    <property type="project" value="UniProtKB-UniRule"/>
</dbReference>
<dbReference type="Gene3D" id="3.20.170.30">
    <property type="match status" value="1"/>
</dbReference>
<dbReference type="Gene3D" id="1.10.10.970">
    <property type="entry name" value="RNA 2'-phosphotransferase, Tpt1/KptA family, N-terminal domain"/>
    <property type="match status" value="1"/>
</dbReference>
<dbReference type="HAMAP" id="MF_00299">
    <property type="entry name" value="KptA"/>
    <property type="match status" value="1"/>
</dbReference>
<dbReference type="InterPro" id="IPR002745">
    <property type="entry name" value="Ptrans_KptA/Tpt1"/>
</dbReference>
<dbReference type="InterPro" id="IPR042081">
    <property type="entry name" value="RNA_2'-PTrans_C"/>
</dbReference>
<dbReference type="InterPro" id="IPR022928">
    <property type="entry name" value="RNA_2'-PTrans_KptA"/>
</dbReference>
<dbReference type="InterPro" id="IPR042080">
    <property type="entry name" value="RNA_2'-PTrans_N"/>
</dbReference>
<dbReference type="NCBIfam" id="NF002014">
    <property type="entry name" value="PRK00819.1-4"/>
    <property type="match status" value="1"/>
</dbReference>
<dbReference type="PANTHER" id="PTHR12684">
    <property type="entry name" value="PUTATIVE PHOSPHOTRANSFERASE"/>
    <property type="match status" value="1"/>
</dbReference>
<dbReference type="PANTHER" id="PTHR12684:SF2">
    <property type="entry name" value="TRNA 2'-PHOSPHOTRANSFERASE 1"/>
    <property type="match status" value="1"/>
</dbReference>
<dbReference type="Pfam" id="PF01885">
    <property type="entry name" value="PTS_2-RNA"/>
    <property type="match status" value="1"/>
</dbReference>
<dbReference type="SUPFAM" id="SSF56399">
    <property type="entry name" value="ADP-ribosylation"/>
    <property type="match status" value="1"/>
</dbReference>
<evidence type="ECO:0000255" key="1">
    <source>
        <dbReference type="HAMAP-Rule" id="MF_00299"/>
    </source>
</evidence>
<comment type="function">
    <text evidence="1">Removes the 2'-phosphate from RNA via an intermediate in which the phosphate is ADP-ribosylated by NAD followed by a presumed transesterification to release the RNA and generate ADP-ribose 1''-2''-cyclic phosphate (APPR&gt;P). May function as an ADP-ribosylase.</text>
</comment>
<comment type="similarity">
    <text evidence="1">Belongs to the KptA/TPT1 family.</text>
</comment>
<gene>
    <name evidence="1" type="primary">kptA</name>
    <name type="ordered locus">Fjoh_0748</name>
</gene>
<accession>A5FLZ4</accession>
<reference key="1">
    <citation type="journal article" date="2009" name="Appl. Environ. Microbiol.">
        <title>Novel features of the polysaccharide-digesting gliding bacterium Flavobacterium johnsoniae as revealed by genome sequence analysis.</title>
        <authorList>
            <person name="McBride M.J."/>
            <person name="Xie G."/>
            <person name="Martens E.C."/>
            <person name="Lapidus A."/>
            <person name="Henrissat B."/>
            <person name="Rhodes R.G."/>
            <person name="Goltsman E."/>
            <person name="Wang W."/>
            <person name="Xu J."/>
            <person name="Hunnicutt D.W."/>
            <person name="Staroscik A.M."/>
            <person name="Hoover T.R."/>
            <person name="Cheng Y.Q."/>
            <person name="Stein J.L."/>
        </authorList>
    </citation>
    <scope>NUCLEOTIDE SEQUENCE [LARGE SCALE GENOMIC DNA]</scope>
    <source>
        <strain>ATCC 17061 / DSM 2064 / JCM 8514 / BCRC 14874 / CCUG 350202 / NBRC 14942 / NCIMB 11054 / UW101</strain>
    </source>
</reference>